<gene>
    <name evidence="1" type="primary">ugpC</name>
    <name type="ordered locus">BPSL3163</name>
</gene>
<accession>Q63Q62</accession>
<protein>
    <recommendedName>
        <fullName evidence="1">sn-glycerol-3-phosphate import ATP-binding protein UgpC</fullName>
        <ecNumber evidence="1">7.6.2.10</ecNumber>
    </recommendedName>
</protein>
<reference key="1">
    <citation type="journal article" date="2004" name="Proc. Natl. Acad. Sci. U.S.A.">
        <title>Genomic plasticity of the causative agent of melioidosis, Burkholderia pseudomallei.</title>
        <authorList>
            <person name="Holden M.T.G."/>
            <person name="Titball R.W."/>
            <person name="Peacock S.J."/>
            <person name="Cerdeno-Tarraga A.-M."/>
            <person name="Atkins T."/>
            <person name="Crossman L.C."/>
            <person name="Pitt T."/>
            <person name="Churcher C."/>
            <person name="Mungall K.L."/>
            <person name="Bentley S.D."/>
            <person name="Sebaihia M."/>
            <person name="Thomson N.R."/>
            <person name="Bason N."/>
            <person name="Beacham I.R."/>
            <person name="Brooks K."/>
            <person name="Brown K.A."/>
            <person name="Brown N.F."/>
            <person name="Challis G.L."/>
            <person name="Cherevach I."/>
            <person name="Chillingworth T."/>
            <person name="Cronin A."/>
            <person name="Crossett B."/>
            <person name="Davis P."/>
            <person name="DeShazer D."/>
            <person name="Feltwell T."/>
            <person name="Fraser A."/>
            <person name="Hance Z."/>
            <person name="Hauser H."/>
            <person name="Holroyd S."/>
            <person name="Jagels K."/>
            <person name="Keith K.E."/>
            <person name="Maddison M."/>
            <person name="Moule S."/>
            <person name="Price C."/>
            <person name="Quail M.A."/>
            <person name="Rabbinowitsch E."/>
            <person name="Rutherford K."/>
            <person name="Sanders M."/>
            <person name="Simmonds M."/>
            <person name="Songsivilai S."/>
            <person name="Stevens K."/>
            <person name="Tumapa S."/>
            <person name="Vesaratchavest M."/>
            <person name="Whitehead S."/>
            <person name="Yeats C."/>
            <person name="Barrell B.G."/>
            <person name="Oyston P.C.F."/>
            <person name="Parkhill J."/>
        </authorList>
    </citation>
    <scope>NUCLEOTIDE SEQUENCE [LARGE SCALE GENOMIC DNA]</scope>
    <source>
        <strain>K96243</strain>
    </source>
</reference>
<feature type="chain" id="PRO_0000289742" description="sn-glycerol-3-phosphate import ATP-binding protein UgpC">
    <location>
        <begin position="1"/>
        <end position="360"/>
    </location>
</feature>
<feature type="domain" description="ABC transporter" evidence="1">
    <location>
        <begin position="4"/>
        <end position="235"/>
    </location>
</feature>
<feature type="binding site" evidence="1">
    <location>
        <begin position="37"/>
        <end position="44"/>
    </location>
    <ligand>
        <name>ATP</name>
        <dbReference type="ChEBI" id="CHEBI:30616"/>
    </ligand>
</feature>
<evidence type="ECO:0000255" key="1">
    <source>
        <dbReference type="HAMAP-Rule" id="MF_01727"/>
    </source>
</evidence>
<dbReference type="EC" id="7.6.2.10" evidence="1"/>
<dbReference type="EMBL" id="BX571965">
    <property type="protein sequence ID" value="CAH37173.1"/>
    <property type="molecule type" value="Genomic_DNA"/>
</dbReference>
<dbReference type="RefSeq" id="WP_004542709.1">
    <property type="nucleotide sequence ID" value="NZ_CP009538.1"/>
</dbReference>
<dbReference type="RefSeq" id="YP_109756.1">
    <property type="nucleotide sequence ID" value="NC_006350.1"/>
</dbReference>
<dbReference type="SMR" id="Q63Q62"/>
<dbReference type="STRING" id="272560.BPSL3163"/>
<dbReference type="KEGG" id="bps:BPSL3163"/>
<dbReference type="PATRIC" id="fig|272560.51.peg.2076"/>
<dbReference type="eggNOG" id="COG3842">
    <property type="taxonomic scope" value="Bacteria"/>
</dbReference>
<dbReference type="Proteomes" id="UP000000605">
    <property type="component" value="Chromosome 1"/>
</dbReference>
<dbReference type="GO" id="GO:0055052">
    <property type="term" value="C:ATP-binding cassette (ABC) transporter complex, substrate-binding subunit-containing"/>
    <property type="evidence" value="ECO:0007669"/>
    <property type="project" value="TreeGrafter"/>
</dbReference>
<dbReference type="GO" id="GO:0015430">
    <property type="term" value="F:ABC-type glycerol-3-phosphate transporter activity"/>
    <property type="evidence" value="ECO:0007669"/>
    <property type="project" value="UniProtKB-EC"/>
</dbReference>
<dbReference type="GO" id="GO:0005524">
    <property type="term" value="F:ATP binding"/>
    <property type="evidence" value="ECO:0007669"/>
    <property type="project" value="UniProtKB-KW"/>
</dbReference>
<dbReference type="GO" id="GO:0016887">
    <property type="term" value="F:ATP hydrolysis activity"/>
    <property type="evidence" value="ECO:0007669"/>
    <property type="project" value="InterPro"/>
</dbReference>
<dbReference type="GO" id="GO:0008643">
    <property type="term" value="P:carbohydrate transport"/>
    <property type="evidence" value="ECO:0007669"/>
    <property type="project" value="InterPro"/>
</dbReference>
<dbReference type="GO" id="GO:0001407">
    <property type="term" value="P:glycerophosphodiester transmembrane transport"/>
    <property type="evidence" value="ECO:0007669"/>
    <property type="project" value="TreeGrafter"/>
</dbReference>
<dbReference type="CDD" id="cd03301">
    <property type="entry name" value="ABC_MalK_N"/>
    <property type="match status" value="1"/>
</dbReference>
<dbReference type="FunFam" id="3.40.50.300:FF:000042">
    <property type="entry name" value="Maltose/maltodextrin ABC transporter, ATP-binding protein"/>
    <property type="match status" value="1"/>
</dbReference>
<dbReference type="Gene3D" id="2.40.50.100">
    <property type="match status" value="1"/>
</dbReference>
<dbReference type="Gene3D" id="2.40.50.140">
    <property type="entry name" value="Nucleic acid-binding proteins"/>
    <property type="match status" value="1"/>
</dbReference>
<dbReference type="Gene3D" id="3.40.50.300">
    <property type="entry name" value="P-loop containing nucleotide triphosphate hydrolases"/>
    <property type="match status" value="1"/>
</dbReference>
<dbReference type="InterPro" id="IPR003593">
    <property type="entry name" value="AAA+_ATPase"/>
</dbReference>
<dbReference type="InterPro" id="IPR003439">
    <property type="entry name" value="ABC_transporter-like_ATP-bd"/>
</dbReference>
<dbReference type="InterPro" id="IPR017871">
    <property type="entry name" value="ABC_transporter-like_CS"/>
</dbReference>
<dbReference type="InterPro" id="IPR015855">
    <property type="entry name" value="ABC_transpr_MalK-like"/>
</dbReference>
<dbReference type="InterPro" id="IPR047641">
    <property type="entry name" value="ABC_transpr_MalK/UgpC-like"/>
</dbReference>
<dbReference type="InterPro" id="IPR008995">
    <property type="entry name" value="Mo/tungstate-bd_C_term_dom"/>
</dbReference>
<dbReference type="InterPro" id="IPR012340">
    <property type="entry name" value="NA-bd_OB-fold"/>
</dbReference>
<dbReference type="InterPro" id="IPR040582">
    <property type="entry name" value="OB_MalK-like"/>
</dbReference>
<dbReference type="InterPro" id="IPR027417">
    <property type="entry name" value="P-loop_NTPase"/>
</dbReference>
<dbReference type="NCBIfam" id="NF008653">
    <property type="entry name" value="PRK11650.1"/>
    <property type="match status" value="1"/>
</dbReference>
<dbReference type="PANTHER" id="PTHR43875">
    <property type="entry name" value="MALTODEXTRIN IMPORT ATP-BINDING PROTEIN MSMX"/>
    <property type="match status" value="1"/>
</dbReference>
<dbReference type="PANTHER" id="PTHR43875:SF12">
    <property type="entry name" value="SN-GLYCEROL-3-PHOSPHATE IMPORT ATP-BINDING PROTEIN UGPC"/>
    <property type="match status" value="1"/>
</dbReference>
<dbReference type="Pfam" id="PF00005">
    <property type="entry name" value="ABC_tran"/>
    <property type="match status" value="1"/>
</dbReference>
<dbReference type="Pfam" id="PF17912">
    <property type="entry name" value="OB_MalK"/>
    <property type="match status" value="1"/>
</dbReference>
<dbReference type="SMART" id="SM00382">
    <property type="entry name" value="AAA"/>
    <property type="match status" value="1"/>
</dbReference>
<dbReference type="SUPFAM" id="SSF50331">
    <property type="entry name" value="MOP-like"/>
    <property type="match status" value="1"/>
</dbReference>
<dbReference type="SUPFAM" id="SSF52540">
    <property type="entry name" value="P-loop containing nucleoside triphosphate hydrolases"/>
    <property type="match status" value="1"/>
</dbReference>
<dbReference type="PROSITE" id="PS00211">
    <property type="entry name" value="ABC_TRANSPORTER_1"/>
    <property type="match status" value="1"/>
</dbReference>
<dbReference type="PROSITE" id="PS50893">
    <property type="entry name" value="ABC_TRANSPORTER_2"/>
    <property type="match status" value="1"/>
</dbReference>
<dbReference type="PROSITE" id="PS51315">
    <property type="entry name" value="UGPC"/>
    <property type="match status" value="1"/>
</dbReference>
<name>UGPC_BURPS</name>
<sequence length="360" mass="38692">MAALSLKGVRKSYGGAQYVLHGIDVDIADGEFVVLVGPSGCGKSTLLRMIAGLETVTEGEIAIGGRVVNALEPKDRDIAMVFQNYALYPHMTVAQNMGYGLKIRGVERALIDARVQAAAQILELGPLLARRPRELSGGQRQRVAMGRAIVREPSVFLFDEPLSNLDAKLRVQMRLEIQRLHARLATTSVYVTHDQIEAMTLAQRVIVMNRGYAEQIGAPVDVYEKPATTFVASFIGSPAMNLLHGRLSEDGAAFDVADGPRLPVAGAAGAGRGIAPGREWILGVRPEHMTPQPGEAFATLAVDSCELLGADNLAHGRWGAHDVAVRLPHAMRPTRGETLPVALPARHLHFFDPATGKRAG</sequence>
<proteinExistence type="inferred from homology"/>
<organism>
    <name type="scientific">Burkholderia pseudomallei (strain K96243)</name>
    <dbReference type="NCBI Taxonomy" id="272560"/>
    <lineage>
        <taxon>Bacteria</taxon>
        <taxon>Pseudomonadati</taxon>
        <taxon>Pseudomonadota</taxon>
        <taxon>Betaproteobacteria</taxon>
        <taxon>Burkholderiales</taxon>
        <taxon>Burkholderiaceae</taxon>
        <taxon>Burkholderia</taxon>
        <taxon>pseudomallei group</taxon>
    </lineage>
</organism>
<comment type="function">
    <text evidence="1">Part of the ABC transporter complex UgpBAEC involved in sn-glycerol-3-phosphate (G3P) import. Responsible for energy coupling to the transport system.</text>
</comment>
<comment type="catalytic activity">
    <reaction evidence="1">
        <text>sn-glycerol 3-phosphate(out) + ATP + H2O = sn-glycerol 3-phosphate(in) + ADP + phosphate + H(+)</text>
        <dbReference type="Rhea" id="RHEA:21668"/>
        <dbReference type="ChEBI" id="CHEBI:15377"/>
        <dbReference type="ChEBI" id="CHEBI:15378"/>
        <dbReference type="ChEBI" id="CHEBI:30616"/>
        <dbReference type="ChEBI" id="CHEBI:43474"/>
        <dbReference type="ChEBI" id="CHEBI:57597"/>
        <dbReference type="ChEBI" id="CHEBI:456216"/>
        <dbReference type="EC" id="7.6.2.10"/>
    </reaction>
</comment>
<comment type="subunit">
    <text evidence="1">The complex is composed of two ATP-binding proteins (UgpC), two transmembrane proteins (UgpA and UgpE) and a solute-binding protein (UgpB).</text>
</comment>
<comment type="subcellular location">
    <subcellularLocation>
        <location evidence="1">Cell inner membrane</location>
        <topology evidence="1">Peripheral membrane protein</topology>
    </subcellularLocation>
</comment>
<comment type="similarity">
    <text evidence="1">Belongs to the ABC transporter superfamily. sn-glycerol-3-phosphate importer (TC 3.A.1.1.3) family.</text>
</comment>
<keyword id="KW-0067">ATP-binding</keyword>
<keyword id="KW-0997">Cell inner membrane</keyword>
<keyword id="KW-1003">Cell membrane</keyword>
<keyword id="KW-0472">Membrane</keyword>
<keyword id="KW-0547">Nucleotide-binding</keyword>
<keyword id="KW-1185">Reference proteome</keyword>
<keyword id="KW-0762">Sugar transport</keyword>
<keyword id="KW-1278">Translocase</keyword>
<keyword id="KW-0813">Transport</keyword>